<gene>
    <name evidence="1" type="primary">deoC</name>
    <name type="ordered locus">BCG9842_B3451</name>
</gene>
<dbReference type="EC" id="4.1.2.4" evidence="1"/>
<dbReference type="EMBL" id="CP001186">
    <property type="protein sequence ID" value="ACK97343.1"/>
    <property type="molecule type" value="Genomic_DNA"/>
</dbReference>
<dbReference type="RefSeq" id="WP_001017441.1">
    <property type="nucleotide sequence ID" value="NC_011772.1"/>
</dbReference>
<dbReference type="SMR" id="B7IS80"/>
<dbReference type="GeneID" id="72448586"/>
<dbReference type="KEGG" id="bcg:BCG9842_B3451"/>
<dbReference type="HOGENOM" id="CLU_053595_0_1_9"/>
<dbReference type="UniPathway" id="UPA00002">
    <property type="reaction ID" value="UER00468"/>
</dbReference>
<dbReference type="Proteomes" id="UP000006744">
    <property type="component" value="Chromosome"/>
</dbReference>
<dbReference type="GO" id="GO:0005737">
    <property type="term" value="C:cytoplasm"/>
    <property type="evidence" value="ECO:0007669"/>
    <property type="project" value="UniProtKB-SubCell"/>
</dbReference>
<dbReference type="GO" id="GO:0004139">
    <property type="term" value="F:deoxyribose-phosphate aldolase activity"/>
    <property type="evidence" value="ECO:0007669"/>
    <property type="project" value="UniProtKB-UniRule"/>
</dbReference>
<dbReference type="GO" id="GO:0006018">
    <property type="term" value="P:2-deoxyribose 1-phosphate catabolic process"/>
    <property type="evidence" value="ECO:0007669"/>
    <property type="project" value="UniProtKB-UniRule"/>
</dbReference>
<dbReference type="GO" id="GO:0016052">
    <property type="term" value="P:carbohydrate catabolic process"/>
    <property type="evidence" value="ECO:0007669"/>
    <property type="project" value="TreeGrafter"/>
</dbReference>
<dbReference type="GO" id="GO:0009264">
    <property type="term" value="P:deoxyribonucleotide catabolic process"/>
    <property type="evidence" value="ECO:0007669"/>
    <property type="project" value="InterPro"/>
</dbReference>
<dbReference type="CDD" id="cd00959">
    <property type="entry name" value="DeoC"/>
    <property type="match status" value="1"/>
</dbReference>
<dbReference type="FunFam" id="3.20.20.70:FF:000044">
    <property type="entry name" value="Deoxyribose-phosphate aldolase"/>
    <property type="match status" value="1"/>
</dbReference>
<dbReference type="Gene3D" id="3.20.20.70">
    <property type="entry name" value="Aldolase class I"/>
    <property type="match status" value="1"/>
</dbReference>
<dbReference type="HAMAP" id="MF_00114">
    <property type="entry name" value="DeoC_type1"/>
    <property type="match status" value="1"/>
</dbReference>
<dbReference type="InterPro" id="IPR013785">
    <property type="entry name" value="Aldolase_TIM"/>
</dbReference>
<dbReference type="InterPro" id="IPR011343">
    <property type="entry name" value="DeoC"/>
</dbReference>
<dbReference type="InterPro" id="IPR002915">
    <property type="entry name" value="DeoC/FbaB/LacD_aldolase"/>
</dbReference>
<dbReference type="InterPro" id="IPR028581">
    <property type="entry name" value="DeoC_typeI"/>
</dbReference>
<dbReference type="NCBIfam" id="TIGR00126">
    <property type="entry name" value="deoC"/>
    <property type="match status" value="1"/>
</dbReference>
<dbReference type="PANTHER" id="PTHR10889">
    <property type="entry name" value="DEOXYRIBOSE-PHOSPHATE ALDOLASE"/>
    <property type="match status" value="1"/>
</dbReference>
<dbReference type="PANTHER" id="PTHR10889:SF1">
    <property type="entry name" value="DEOXYRIBOSE-PHOSPHATE ALDOLASE"/>
    <property type="match status" value="1"/>
</dbReference>
<dbReference type="Pfam" id="PF01791">
    <property type="entry name" value="DeoC"/>
    <property type="match status" value="1"/>
</dbReference>
<dbReference type="PIRSF" id="PIRSF001357">
    <property type="entry name" value="DeoC"/>
    <property type="match status" value="1"/>
</dbReference>
<dbReference type="SMART" id="SM01133">
    <property type="entry name" value="DeoC"/>
    <property type="match status" value="1"/>
</dbReference>
<dbReference type="SUPFAM" id="SSF51569">
    <property type="entry name" value="Aldolase"/>
    <property type="match status" value="1"/>
</dbReference>
<protein>
    <recommendedName>
        <fullName evidence="1">Deoxyribose-phosphate aldolase</fullName>
        <shortName evidence="1">DERA</shortName>
        <ecNumber evidence="1">4.1.2.4</ecNumber>
    </recommendedName>
    <alternativeName>
        <fullName evidence="1">2-deoxy-D-ribose 5-phosphate aldolase</fullName>
    </alternativeName>
    <alternativeName>
        <fullName evidence="1">Phosphodeoxyriboaldolase</fullName>
        <shortName evidence="1">Deoxyriboaldolase</shortName>
    </alternativeName>
</protein>
<organism>
    <name type="scientific">Bacillus cereus (strain G9842)</name>
    <dbReference type="NCBI Taxonomy" id="405531"/>
    <lineage>
        <taxon>Bacteria</taxon>
        <taxon>Bacillati</taxon>
        <taxon>Bacillota</taxon>
        <taxon>Bacilli</taxon>
        <taxon>Bacillales</taxon>
        <taxon>Bacillaceae</taxon>
        <taxon>Bacillus</taxon>
        <taxon>Bacillus cereus group</taxon>
    </lineage>
</organism>
<proteinExistence type="inferred from homology"/>
<keyword id="KW-0963">Cytoplasm</keyword>
<keyword id="KW-0456">Lyase</keyword>
<keyword id="KW-0704">Schiff base</keyword>
<sequence>MNIAKLIDHTILKANTTKEDVMKVIEEAKEYKFASVCINPTWVKLAADELAGHDVDVCTVIGFPLGASTTETKAFETKDAIAKGATEVDMVINVGALKDGDNELVEKDIYEVVQAAKGKALVKVIIETCLLTDEEKVRACELSVKAGADFVKTSTGFSTGGATAEDIALMRKTVGPNVGVKASGGVRTREDADKMVAAGASRVGASASVAIVLNDAKGATDNY</sequence>
<feature type="chain" id="PRO_1000117540" description="Deoxyribose-phosphate aldolase">
    <location>
        <begin position="1"/>
        <end position="223"/>
    </location>
</feature>
<feature type="active site" description="Proton donor/acceptor" evidence="1">
    <location>
        <position position="89"/>
    </location>
</feature>
<feature type="active site" description="Schiff-base intermediate with acetaldehyde" evidence="1">
    <location>
        <position position="152"/>
    </location>
</feature>
<feature type="active site" description="Proton donor/acceptor" evidence="1">
    <location>
        <position position="181"/>
    </location>
</feature>
<accession>B7IS80</accession>
<comment type="function">
    <text evidence="1">Catalyzes a reversible aldol reaction between acetaldehyde and D-glyceraldehyde 3-phosphate to generate 2-deoxy-D-ribose 5-phosphate.</text>
</comment>
<comment type="catalytic activity">
    <reaction evidence="1">
        <text>2-deoxy-D-ribose 5-phosphate = D-glyceraldehyde 3-phosphate + acetaldehyde</text>
        <dbReference type="Rhea" id="RHEA:12821"/>
        <dbReference type="ChEBI" id="CHEBI:15343"/>
        <dbReference type="ChEBI" id="CHEBI:59776"/>
        <dbReference type="ChEBI" id="CHEBI:62877"/>
        <dbReference type="EC" id="4.1.2.4"/>
    </reaction>
</comment>
<comment type="pathway">
    <text evidence="1">Carbohydrate degradation; 2-deoxy-D-ribose 1-phosphate degradation; D-glyceraldehyde 3-phosphate and acetaldehyde from 2-deoxy-alpha-D-ribose 1-phosphate: step 2/2.</text>
</comment>
<comment type="subcellular location">
    <subcellularLocation>
        <location evidence="1">Cytoplasm</location>
    </subcellularLocation>
</comment>
<comment type="similarity">
    <text evidence="1">Belongs to the DeoC/FbaB aldolase family. DeoC type 1 subfamily.</text>
</comment>
<name>DEOC_BACC2</name>
<reference key="1">
    <citation type="submission" date="2008-10" db="EMBL/GenBank/DDBJ databases">
        <title>Genome sequence of Bacillus cereus G9842.</title>
        <authorList>
            <person name="Dodson R.J."/>
            <person name="Durkin A.S."/>
            <person name="Rosovitz M.J."/>
            <person name="Rasko D.A."/>
            <person name="Hoffmaster A."/>
            <person name="Ravel J."/>
            <person name="Sutton G."/>
        </authorList>
    </citation>
    <scope>NUCLEOTIDE SEQUENCE [LARGE SCALE GENOMIC DNA]</scope>
    <source>
        <strain>G9842</strain>
    </source>
</reference>
<evidence type="ECO:0000255" key="1">
    <source>
        <dbReference type="HAMAP-Rule" id="MF_00114"/>
    </source>
</evidence>